<organism>
    <name type="scientific">Pyropia yezoensis</name>
    <name type="common">Susabi-nori</name>
    <name type="synonym">Porphyra yezoensis</name>
    <dbReference type="NCBI Taxonomy" id="2788"/>
    <lineage>
        <taxon>Eukaryota</taxon>
        <taxon>Rhodophyta</taxon>
        <taxon>Bangiophyceae</taxon>
        <taxon>Bangiales</taxon>
        <taxon>Bangiaceae</taxon>
        <taxon>Pyropia</taxon>
    </lineage>
</organism>
<protein>
    <recommendedName>
        <fullName>Anthranilate synthase component 2</fullName>
        <shortName>AS</shortName>
        <ecNumber>4.1.3.27</ecNumber>
    </recommendedName>
    <alternativeName>
        <fullName>Anthranilate synthase, glutamine amidotransferase component</fullName>
    </alternativeName>
</protein>
<feature type="chain" id="PRO_0000277284" description="Anthranilate synthase component 2">
    <location>
        <begin position="1"/>
        <end position="189"/>
    </location>
</feature>
<feature type="domain" description="Glutamine amidotransferase type-1" evidence="2">
    <location>
        <begin position="1"/>
        <end position="189"/>
    </location>
</feature>
<feature type="active site" description="Nucleophile; for GATase activity" evidence="1">
    <location>
        <position position="79"/>
    </location>
</feature>
<feature type="active site" evidence="2">
    <location>
        <position position="169"/>
    </location>
</feature>
<feature type="active site" evidence="2">
    <location>
        <position position="171"/>
    </location>
</feature>
<feature type="binding site" evidence="1">
    <location>
        <begin position="52"/>
        <end position="54"/>
    </location>
    <ligand>
        <name>L-glutamine</name>
        <dbReference type="ChEBI" id="CHEBI:58359"/>
    </ligand>
</feature>
<feature type="binding site" evidence="1">
    <location>
        <position position="83"/>
    </location>
    <ligand>
        <name>L-glutamine</name>
        <dbReference type="ChEBI" id="CHEBI:58359"/>
    </ligand>
</feature>
<feature type="binding site" evidence="1">
    <location>
        <begin position="129"/>
        <end position="130"/>
    </location>
    <ligand>
        <name>L-glutamine</name>
        <dbReference type="ChEBI" id="CHEBI:58359"/>
    </ligand>
</feature>
<accession>Q1XDC5</accession>
<sequence length="189" mass="21305">MILIIDNYDSFTYNLAQCVGELGYDVLVCRNDEIDIPTIKQLNPNKIIISPGPGKPSDSGISLDVISSFSDSIPILGVCLGHQSIGYLNGGRIIKVSEIMHGKTSKIYHNNEDLFKTLPNPFIATRYHSLIIDNLNFPSSLAITAWTENNIIMACRHKDNQMLRGIQFHPESLWTFYGQQLLRNFLEYS</sequence>
<evidence type="ECO:0000250" key="1">
    <source>
        <dbReference type="UniProtKB" id="P00900"/>
    </source>
</evidence>
<evidence type="ECO:0000255" key="2">
    <source>
        <dbReference type="PROSITE-ProRule" id="PRU00605"/>
    </source>
</evidence>
<comment type="catalytic activity">
    <reaction>
        <text>chorismate + L-glutamine = anthranilate + pyruvate + L-glutamate + H(+)</text>
        <dbReference type="Rhea" id="RHEA:21732"/>
        <dbReference type="ChEBI" id="CHEBI:15361"/>
        <dbReference type="ChEBI" id="CHEBI:15378"/>
        <dbReference type="ChEBI" id="CHEBI:16567"/>
        <dbReference type="ChEBI" id="CHEBI:29748"/>
        <dbReference type="ChEBI" id="CHEBI:29985"/>
        <dbReference type="ChEBI" id="CHEBI:58359"/>
        <dbReference type="EC" id="4.1.3.27"/>
    </reaction>
</comment>
<comment type="pathway">
    <text>Amino-acid biosynthesis; L-tryptophan biosynthesis; L-tryptophan from chorismate: step 1/5.</text>
</comment>
<comment type="subunit">
    <text>Tetramer of two components I and two components II.</text>
</comment>
<comment type="subcellular location">
    <subcellularLocation>
        <location>Plastid</location>
        <location>Chloroplast</location>
    </subcellularLocation>
</comment>
<comment type="miscellaneous">
    <text>Component I catalyzes the formation of anthranilate using ammonia rather than glutamine, whereas component II provides glutamine amidotransferase activity.</text>
</comment>
<proteinExistence type="predicted"/>
<geneLocation type="chloroplast"/>
<reference key="1">
    <citation type="submission" date="2003-11" db="EMBL/GenBank/DDBJ databases">
        <title>Whole genome sequence of Porphyra yezoensis chloroplast.</title>
        <authorList>
            <person name="Kunimoto M."/>
            <person name="Morishima K."/>
            <person name="Yoshikawa M."/>
            <person name="Fukuda S."/>
            <person name="Kobayashi T."/>
            <person name="Kobayashi M."/>
            <person name="Okazaki T."/>
            <person name="Ohara I."/>
            <person name="Nakayama I."/>
        </authorList>
    </citation>
    <scope>NUCLEOTIDE SEQUENCE [LARGE SCALE GENOMIC DNA]</scope>
    <source>
        <strain>U-51</strain>
    </source>
</reference>
<name>TRPG_PYRYE</name>
<dbReference type="EC" id="4.1.3.27"/>
<dbReference type="EMBL" id="AP006715">
    <property type="protein sequence ID" value="BAE92486.1"/>
    <property type="molecule type" value="Genomic_DNA"/>
</dbReference>
<dbReference type="RefSeq" id="YP_537043.1">
    <property type="nucleotide sequence ID" value="NC_007932.1"/>
</dbReference>
<dbReference type="SMR" id="Q1XDC5"/>
<dbReference type="GeneID" id="3978746"/>
<dbReference type="UniPathway" id="UPA00035">
    <property type="reaction ID" value="UER00040"/>
</dbReference>
<dbReference type="GO" id="GO:0009507">
    <property type="term" value="C:chloroplast"/>
    <property type="evidence" value="ECO:0007669"/>
    <property type="project" value="UniProtKB-SubCell"/>
</dbReference>
<dbReference type="GO" id="GO:0005829">
    <property type="term" value="C:cytosol"/>
    <property type="evidence" value="ECO:0007669"/>
    <property type="project" value="TreeGrafter"/>
</dbReference>
<dbReference type="GO" id="GO:0004049">
    <property type="term" value="F:anthranilate synthase activity"/>
    <property type="evidence" value="ECO:0007669"/>
    <property type="project" value="UniProtKB-EC"/>
</dbReference>
<dbReference type="GO" id="GO:0000162">
    <property type="term" value="P:L-tryptophan biosynthetic process"/>
    <property type="evidence" value="ECO:0007669"/>
    <property type="project" value="UniProtKB-UniPathway"/>
</dbReference>
<dbReference type="CDD" id="cd01743">
    <property type="entry name" value="GATase1_Anthranilate_Synthase"/>
    <property type="match status" value="1"/>
</dbReference>
<dbReference type="FunFam" id="3.40.50.880:FF:000003">
    <property type="entry name" value="Anthranilate synthase component II"/>
    <property type="match status" value="1"/>
</dbReference>
<dbReference type="Gene3D" id="3.40.50.880">
    <property type="match status" value="1"/>
</dbReference>
<dbReference type="InterPro" id="IPR050472">
    <property type="entry name" value="Anth_synth/Amidotransfase"/>
</dbReference>
<dbReference type="InterPro" id="IPR029062">
    <property type="entry name" value="Class_I_gatase-like"/>
</dbReference>
<dbReference type="InterPro" id="IPR017926">
    <property type="entry name" value="GATASE"/>
</dbReference>
<dbReference type="InterPro" id="IPR006221">
    <property type="entry name" value="TrpG/PapA_dom"/>
</dbReference>
<dbReference type="NCBIfam" id="TIGR00566">
    <property type="entry name" value="trpG_papA"/>
    <property type="match status" value="1"/>
</dbReference>
<dbReference type="PANTHER" id="PTHR43418:SF4">
    <property type="entry name" value="MULTIFUNCTIONAL TRYPTOPHAN BIOSYNTHESIS PROTEIN"/>
    <property type="match status" value="1"/>
</dbReference>
<dbReference type="PANTHER" id="PTHR43418">
    <property type="entry name" value="MULTIFUNCTIONAL TRYPTOPHAN BIOSYNTHESIS PROTEIN-RELATED"/>
    <property type="match status" value="1"/>
</dbReference>
<dbReference type="Pfam" id="PF00117">
    <property type="entry name" value="GATase"/>
    <property type="match status" value="1"/>
</dbReference>
<dbReference type="PRINTS" id="PR00097">
    <property type="entry name" value="ANTSNTHASEII"/>
</dbReference>
<dbReference type="PRINTS" id="PR00099">
    <property type="entry name" value="CPSGATASE"/>
</dbReference>
<dbReference type="PRINTS" id="PR00096">
    <property type="entry name" value="GATASE"/>
</dbReference>
<dbReference type="SUPFAM" id="SSF52317">
    <property type="entry name" value="Class I glutamine amidotransferase-like"/>
    <property type="match status" value="1"/>
</dbReference>
<dbReference type="PROSITE" id="PS51273">
    <property type="entry name" value="GATASE_TYPE_1"/>
    <property type="match status" value="1"/>
</dbReference>
<gene>
    <name type="primary">trpG</name>
</gene>
<keyword id="KW-0028">Amino-acid biosynthesis</keyword>
<keyword id="KW-0057">Aromatic amino acid biosynthesis</keyword>
<keyword id="KW-0150">Chloroplast</keyword>
<keyword id="KW-0315">Glutamine amidotransferase</keyword>
<keyword id="KW-0456">Lyase</keyword>
<keyword id="KW-0934">Plastid</keyword>
<keyword id="KW-0822">Tryptophan biosynthesis</keyword>